<accession>Q3IZP1</accession>
<evidence type="ECO:0000255" key="1">
    <source>
        <dbReference type="HAMAP-Rule" id="MF_00044"/>
    </source>
</evidence>
<comment type="function">
    <text evidence="1">Aspartyl-tRNA synthetase with relaxed tRNA specificity since it is able to aspartylate not only its cognate tRNA(Asp) but also tRNA(Asn). Reaction proceeds in two steps: L-aspartate is first activated by ATP to form Asp-AMP and then transferred to the acceptor end of tRNA(Asp/Asn).</text>
</comment>
<comment type="catalytic activity">
    <reaction evidence="1">
        <text>tRNA(Asx) + L-aspartate + ATP = L-aspartyl-tRNA(Asx) + AMP + diphosphate</text>
        <dbReference type="Rhea" id="RHEA:18349"/>
        <dbReference type="Rhea" id="RHEA-COMP:9710"/>
        <dbReference type="Rhea" id="RHEA-COMP:9711"/>
        <dbReference type="ChEBI" id="CHEBI:29991"/>
        <dbReference type="ChEBI" id="CHEBI:30616"/>
        <dbReference type="ChEBI" id="CHEBI:33019"/>
        <dbReference type="ChEBI" id="CHEBI:78442"/>
        <dbReference type="ChEBI" id="CHEBI:78516"/>
        <dbReference type="ChEBI" id="CHEBI:456215"/>
        <dbReference type="EC" id="6.1.1.23"/>
    </reaction>
</comment>
<comment type="subunit">
    <text evidence="1">Homodimer.</text>
</comment>
<comment type="subcellular location">
    <subcellularLocation>
        <location evidence="1">Cytoplasm</location>
    </subcellularLocation>
</comment>
<comment type="similarity">
    <text evidence="1">Belongs to the class-II aminoacyl-tRNA synthetase family. Type 1 subfamily.</text>
</comment>
<protein>
    <recommendedName>
        <fullName evidence="1">Aspartate--tRNA(Asp/Asn) ligase</fullName>
        <ecNumber evidence="1">6.1.1.23</ecNumber>
    </recommendedName>
    <alternativeName>
        <fullName evidence="1">Aspartyl-tRNA synthetase</fullName>
        <shortName evidence="1">AspRS</shortName>
    </alternativeName>
    <alternativeName>
        <fullName evidence="1">Non-discriminating aspartyl-tRNA synthetase</fullName>
        <shortName evidence="1">ND-AspRS</shortName>
    </alternativeName>
</protein>
<reference key="1">
    <citation type="submission" date="2005-09" db="EMBL/GenBank/DDBJ databases">
        <title>Complete sequence of chromosome 1 of Rhodobacter sphaeroides 2.4.1.</title>
        <authorList>
            <person name="Copeland A."/>
            <person name="Lucas S."/>
            <person name="Lapidus A."/>
            <person name="Barry K."/>
            <person name="Detter J.C."/>
            <person name="Glavina T."/>
            <person name="Hammon N."/>
            <person name="Israni S."/>
            <person name="Pitluck S."/>
            <person name="Richardson P."/>
            <person name="Mackenzie C."/>
            <person name="Choudhary M."/>
            <person name="Larimer F."/>
            <person name="Hauser L.J."/>
            <person name="Land M."/>
            <person name="Donohue T.J."/>
            <person name="Kaplan S."/>
        </authorList>
    </citation>
    <scope>NUCLEOTIDE SEQUENCE [LARGE SCALE GENOMIC DNA]</scope>
    <source>
        <strain>ATCC 17023 / DSM 158 / JCM 6121 / CCUG 31486 / LMG 2827 / NBRC 12203 / NCIMB 8253 / ATH 2.4.1.</strain>
    </source>
</reference>
<name>SYDND_CERS4</name>
<organism>
    <name type="scientific">Cereibacter sphaeroides (strain ATCC 17023 / DSM 158 / JCM 6121 / CCUG 31486 / LMG 2827 / NBRC 12203 / NCIMB 8253 / ATH 2.4.1.)</name>
    <name type="common">Rhodobacter sphaeroides</name>
    <dbReference type="NCBI Taxonomy" id="272943"/>
    <lineage>
        <taxon>Bacteria</taxon>
        <taxon>Pseudomonadati</taxon>
        <taxon>Pseudomonadota</taxon>
        <taxon>Alphaproteobacteria</taxon>
        <taxon>Rhodobacterales</taxon>
        <taxon>Paracoccaceae</taxon>
        <taxon>Cereibacter</taxon>
    </lineage>
</organism>
<proteinExistence type="inferred from homology"/>
<dbReference type="EC" id="6.1.1.23" evidence="1"/>
<dbReference type="EMBL" id="CP000143">
    <property type="protein sequence ID" value="ABA79993.1"/>
    <property type="molecule type" value="Genomic_DNA"/>
</dbReference>
<dbReference type="RefSeq" id="WP_011338512.1">
    <property type="nucleotide sequence ID" value="NZ_CP030271.1"/>
</dbReference>
<dbReference type="RefSeq" id="YP_353894.1">
    <property type="nucleotide sequence ID" value="NC_007493.2"/>
</dbReference>
<dbReference type="SMR" id="Q3IZP1"/>
<dbReference type="STRING" id="272943.RSP_0815"/>
<dbReference type="EnsemblBacteria" id="ABA79993">
    <property type="protein sequence ID" value="ABA79993"/>
    <property type="gene ID" value="RSP_0815"/>
</dbReference>
<dbReference type="GeneID" id="3718393"/>
<dbReference type="KEGG" id="rsp:RSP_0815"/>
<dbReference type="PATRIC" id="fig|272943.9.peg.2774"/>
<dbReference type="eggNOG" id="COG0173">
    <property type="taxonomic scope" value="Bacteria"/>
</dbReference>
<dbReference type="OrthoDB" id="9802326at2"/>
<dbReference type="PhylomeDB" id="Q3IZP1"/>
<dbReference type="Proteomes" id="UP000002703">
    <property type="component" value="Chromosome 1"/>
</dbReference>
<dbReference type="GO" id="GO:0005737">
    <property type="term" value="C:cytoplasm"/>
    <property type="evidence" value="ECO:0007669"/>
    <property type="project" value="UniProtKB-SubCell"/>
</dbReference>
<dbReference type="GO" id="GO:0004815">
    <property type="term" value="F:aspartate-tRNA ligase activity"/>
    <property type="evidence" value="ECO:0007669"/>
    <property type="project" value="UniProtKB-UniRule"/>
</dbReference>
<dbReference type="GO" id="GO:0050560">
    <property type="term" value="F:aspartate-tRNA(Asn) ligase activity"/>
    <property type="evidence" value="ECO:0007669"/>
    <property type="project" value="UniProtKB-EC"/>
</dbReference>
<dbReference type="GO" id="GO:0005524">
    <property type="term" value="F:ATP binding"/>
    <property type="evidence" value="ECO:0007669"/>
    <property type="project" value="UniProtKB-UniRule"/>
</dbReference>
<dbReference type="GO" id="GO:0003676">
    <property type="term" value="F:nucleic acid binding"/>
    <property type="evidence" value="ECO:0007669"/>
    <property type="project" value="InterPro"/>
</dbReference>
<dbReference type="GO" id="GO:0006422">
    <property type="term" value="P:aspartyl-tRNA aminoacylation"/>
    <property type="evidence" value="ECO:0007669"/>
    <property type="project" value="UniProtKB-UniRule"/>
</dbReference>
<dbReference type="CDD" id="cd04317">
    <property type="entry name" value="EcAspRS_like_N"/>
    <property type="match status" value="1"/>
</dbReference>
<dbReference type="Gene3D" id="3.30.930.10">
    <property type="entry name" value="Bira Bifunctional Protein, Domain 2"/>
    <property type="match status" value="1"/>
</dbReference>
<dbReference type="Gene3D" id="3.30.1360.30">
    <property type="entry name" value="GAD-like domain"/>
    <property type="match status" value="1"/>
</dbReference>
<dbReference type="Gene3D" id="2.40.50.140">
    <property type="entry name" value="Nucleic acid-binding proteins"/>
    <property type="match status" value="1"/>
</dbReference>
<dbReference type="HAMAP" id="MF_00044">
    <property type="entry name" value="Asp_tRNA_synth_type1"/>
    <property type="match status" value="1"/>
</dbReference>
<dbReference type="InterPro" id="IPR004364">
    <property type="entry name" value="Aa-tRNA-synt_II"/>
</dbReference>
<dbReference type="InterPro" id="IPR006195">
    <property type="entry name" value="aa-tRNA-synth_II"/>
</dbReference>
<dbReference type="InterPro" id="IPR045864">
    <property type="entry name" value="aa-tRNA-synth_II/BPL/LPL"/>
</dbReference>
<dbReference type="InterPro" id="IPR004524">
    <property type="entry name" value="Asp-tRNA-ligase_1"/>
</dbReference>
<dbReference type="InterPro" id="IPR047089">
    <property type="entry name" value="Asp-tRNA-ligase_1_N"/>
</dbReference>
<dbReference type="InterPro" id="IPR002312">
    <property type="entry name" value="Asp/Asn-tRNA-synth_IIb"/>
</dbReference>
<dbReference type="InterPro" id="IPR004115">
    <property type="entry name" value="GAD-like_sf"/>
</dbReference>
<dbReference type="InterPro" id="IPR029351">
    <property type="entry name" value="GAD_dom"/>
</dbReference>
<dbReference type="InterPro" id="IPR012340">
    <property type="entry name" value="NA-bd_OB-fold"/>
</dbReference>
<dbReference type="InterPro" id="IPR004365">
    <property type="entry name" value="NA-bd_OB_tRNA"/>
</dbReference>
<dbReference type="NCBIfam" id="TIGR00459">
    <property type="entry name" value="aspS_bact"/>
    <property type="match status" value="1"/>
</dbReference>
<dbReference type="NCBIfam" id="NF001750">
    <property type="entry name" value="PRK00476.1"/>
    <property type="match status" value="1"/>
</dbReference>
<dbReference type="PANTHER" id="PTHR22594:SF5">
    <property type="entry name" value="ASPARTATE--TRNA LIGASE, MITOCHONDRIAL"/>
    <property type="match status" value="1"/>
</dbReference>
<dbReference type="PANTHER" id="PTHR22594">
    <property type="entry name" value="ASPARTYL/LYSYL-TRNA SYNTHETASE"/>
    <property type="match status" value="1"/>
</dbReference>
<dbReference type="Pfam" id="PF02938">
    <property type="entry name" value="GAD"/>
    <property type="match status" value="1"/>
</dbReference>
<dbReference type="Pfam" id="PF00152">
    <property type="entry name" value="tRNA-synt_2"/>
    <property type="match status" value="1"/>
</dbReference>
<dbReference type="Pfam" id="PF01336">
    <property type="entry name" value="tRNA_anti-codon"/>
    <property type="match status" value="1"/>
</dbReference>
<dbReference type="PRINTS" id="PR01042">
    <property type="entry name" value="TRNASYNTHASP"/>
</dbReference>
<dbReference type="SUPFAM" id="SSF55681">
    <property type="entry name" value="Class II aaRS and biotin synthetases"/>
    <property type="match status" value="1"/>
</dbReference>
<dbReference type="SUPFAM" id="SSF55261">
    <property type="entry name" value="GAD domain-like"/>
    <property type="match status" value="1"/>
</dbReference>
<dbReference type="SUPFAM" id="SSF50249">
    <property type="entry name" value="Nucleic acid-binding proteins"/>
    <property type="match status" value="1"/>
</dbReference>
<dbReference type="PROSITE" id="PS50862">
    <property type="entry name" value="AA_TRNA_LIGASE_II"/>
    <property type="match status" value="1"/>
</dbReference>
<feature type="chain" id="PRO_0000235551" description="Aspartate--tRNA(Asp/Asn) ligase">
    <location>
        <begin position="1"/>
        <end position="591"/>
    </location>
</feature>
<feature type="region of interest" description="Aspartate" evidence="1">
    <location>
        <begin position="199"/>
        <end position="202"/>
    </location>
</feature>
<feature type="binding site" evidence="1">
    <location>
        <position position="175"/>
    </location>
    <ligand>
        <name>L-aspartate</name>
        <dbReference type="ChEBI" id="CHEBI:29991"/>
    </ligand>
</feature>
<feature type="binding site" evidence="1">
    <location>
        <begin position="221"/>
        <end position="223"/>
    </location>
    <ligand>
        <name>ATP</name>
        <dbReference type="ChEBI" id="CHEBI:30616"/>
    </ligand>
</feature>
<feature type="binding site" evidence="1">
    <location>
        <position position="221"/>
    </location>
    <ligand>
        <name>L-aspartate</name>
        <dbReference type="ChEBI" id="CHEBI:29991"/>
    </ligand>
</feature>
<feature type="binding site" evidence="1">
    <location>
        <position position="453"/>
    </location>
    <ligand>
        <name>L-aspartate</name>
        <dbReference type="ChEBI" id="CHEBI:29991"/>
    </ligand>
</feature>
<feature type="binding site" evidence="1">
    <location>
        <position position="486"/>
    </location>
    <ligand>
        <name>ATP</name>
        <dbReference type="ChEBI" id="CHEBI:30616"/>
    </ligand>
</feature>
<feature type="binding site" evidence="1">
    <location>
        <position position="493"/>
    </location>
    <ligand>
        <name>L-aspartate</name>
        <dbReference type="ChEBI" id="CHEBI:29991"/>
    </ligand>
</feature>
<feature type="binding site" evidence="1">
    <location>
        <begin position="538"/>
        <end position="541"/>
    </location>
    <ligand>
        <name>ATP</name>
        <dbReference type="ChEBI" id="CHEBI:30616"/>
    </ligand>
</feature>
<feature type="site" description="Important for tRNA non-discrimination" evidence="1">
    <location>
        <position position="33"/>
    </location>
</feature>
<keyword id="KW-0030">Aminoacyl-tRNA synthetase</keyword>
<keyword id="KW-0067">ATP-binding</keyword>
<keyword id="KW-0963">Cytoplasm</keyword>
<keyword id="KW-0436">Ligase</keyword>
<keyword id="KW-0547">Nucleotide-binding</keyword>
<keyword id="KW-0648">Protein biosynthesis</keyword>
<keyword id="KW-1185">Reference proteome</keyword>
<gene>
    <name evidence="1" type="primary">aspS</name>
    <name type="ordered locus">RHOS4_24250</name>
    <name type="ordered locus">RSP_0815</name>
</gene>
<sequence>MHAYRSHTCTELNAAHVGQEVRLSGWVHRVRDHGGVLFLDLRDHYGITQVIADADSPAFAELETVRAEWVIRIEGRVKARDASLVNPKLATGEIEVYATGMSVLGAADELPLPVFGETDYPEETRLTYRFLDLRREKLHQNMMLRSNVVRSLRNRMWGAGFNEFQTPIITASSPEGARDFLVPSRLHPGKFYALPQAPQQFKQLIMVAGFDRYFQIAPCFRDEDPRADRSPTDFYQLDIEMSFVEQEDVFAAVQPVIQGLFEEFGHGKRVDADWPRIAYRDAMLWYGSDKPDLRNPIKMQVVSEHFAGSGFAIFAKLLENEGTEIRAIPAPTGGSRKFCDRMNAFAQSQGLPGMGYIFWRKGDDGAMEAAGPLAKNIGPERTEAIRQQLGLGEGDAAFFLGGKPETFEAVAGRARTEIGRELGLTEENCFKFAWIVDFPMYEKDDEGKIDFSHNPFSMPQGGMEALEGDPLKVHAYQYDLACNGYELISGGIRNHKPEIMFKAFELAGYPKEEVEKRFGGMVKAFRYGAPPHGGCAAGIDRIVMLLADEANIREVIMFPMNQRAEDLLMGAPSEPTNEQLRELRLRVVPKD</sequence>